<gene>
    <name evidence="1" type="primary">gatA</name>
    <name type="ordered locus">Maqu_2730</name>
</gene>
<organism>
    <name type="scientific">Marinobacter nauticus (strain ATCC 700491 / DSM 11845 / VT8)</name>
    <name type="common">Marinobacter aquaeolei</name>
    <dbReference type="NCBI Taxonomy" id="351348"/>
    <lineage>
        <taxon>Bacteria</taxon>
        <taxon>Pseudomonadati</taxon>
        <taxon>Pseudomonadota</taxon>
        <taxon>Gammaproteobacteria</taxon>
        <taxon>Pseudomonadales</taxon>
        <taxon>Marinobacteraceae</taxon>
        <taxon>Marinobacter</taxon>
    </lineage>
</organism>
<dbReference type="EC" id="6.3.5.7" evidence="1"/>
<dbReference type="EMBL" id="CP000514">
    <property type="protein sequence ID" value="ABM19805.1"/>
    <property type="molecule type" value="Genomic_DNA"/>
</dbReference>
<dbReference type="RefSeq" id="WP_011786175.1">
    <property type="nucleotide sequence ID" value="NC_008740.1"/>
</dbReference>
<dbReference type="SMR" id="A1U486"/>
<dbReference type="STRING" id="351348.Maqu_2730"/>
<dbReference type="KEGG" id="maq:Maqu_2730"/>
<dbReference type="eggNOG" id="COG0154">
    <property type="taxonomic scope" value="Bacteria"/>
</dbReference>
<dbReference type="HOGENOM" id="CLU_009600_0_3_6"/>
<dbReference type="OrthoDB" id="9811471at2"/>
<dbReference type="Proteomes" id="UP000000998">
    <property type="component" value="Chromosome"/>
</dbReference>
<dbReference type="GO" id="GO:0030956">
    <property type="term" value="C:glutamyl-tRNA(Gln) amidotransferase complex"/>
    <property type="evidence" value="ECO:0007669"/>
    <property type="project" value="InterPro"/>
</dbReference>
<dbReference type="GO" id="GO:0005524">
    <property type="term" value="F:ATP binding"/>
    <property type="evidence" value="ECO:0007669"/>
    <property type="project" value="UniProtKB-KW"/>
</dbReference>
<dbReference type="GO" id="GO:0050567">
    <property type="term" value="F:glutaminyl-tRNA synthase (glutamine-hydrolyzing) activity"/>
    <property type="evidence" value="ECO:0007669"/>
    <property type="project" value="UniProtKB-UniRule"/>
</dbReference>
<dbReference type="GO" id="GO:0006412">
    <property type="term" value="P:translation"/>
    <property type="evidence" value="ECO:0007669"/>
    <property type="project" value="UniProtKB-UniRule"/>
</dbReference>
<dbReference type="Gene3D" id="3.90.1300.10">
    <property type="entry name" value="Amidase signature (AS) domain"/>
    <property type="match status" value="1"/>
</dbReference>
<dbReference type="HAMAP" id="MF_00120">
    <property type="entry name" value="GatA"/>
    <property type="match status" value="1"/>
</dbReference>
<dbReference type="InterPro" id="IPR000120">
    <property type="entry name" value="Amidase"/>
</dbReference>
<dbReference type="InterPro" id="IPR020556">
    <property type="entry name" value="Amidase_CS"/>
</dbReference>
<dbReference type="InterPro" id="IPR023631">
    <property type="entry name" value="Amidase_dom"/>
</dbReference>
<dbReference type="InterPro" id="IPR036928">
    <property type="entry name" value="AS_sf"/>
</dbReference>
<dbReference type="InterPro" id="IPR004412">
    <property type="entry name" value="GatA"/>
</dbReference>
<dbReference type="NCBIfam" id="TIGR00132">
    <property type="entry name" value="gatA"/>
    <property type="match status" value="1"/>
</dbReference>
<dbReference type="PANTHER" id="PTHR11895:SF151">
    <property type="entry name" value="GLUTAMYL-TRNA(GLN) AMIDOTRANSFERASE SUBUNIT A"/>
    <property type="match status" value="1"/>
</dbReference>
<dbReference type="PANTHER" id="PTHR11895">
    <property type="entry name" value="TRANSAMIDASE"/>
    <property type="match status" value="1"/>
</dbReference>
<dbReference type="Pfam" id="PF01425">
    <property type="entry name" value="Amidase"/>
    <property type="match status" value="1"/>
</dbReference>
<dbReference type="SUPFAM" id="SSF75304">
    <property type="entry name" value="Amidase signature (AS) enzymes"/>
    <property type="match status" value="1"/>
</dbReference>
<dbReference type="PROSITE" id="PS00571">
    <property type="entry name" value="AMIDASES"/>
    <property type="match status" value="1"/>
</dbReference>
<name>GATA_MARN8</name>
<accession>A1U486</accession>
<evidence type="ECO:0000255" key="1">
    <source>
        <dbReference type="HAMAP-Rule" id="MF_00120"/>
    </source>
</evidence>
<proteinExistence type="inferred from homology"/>
<sequence>MHNKSVAELSRELESGRISSVELTQQFLDRLKTEDGKYNSFITISDEQALAEARAADEMRAAGKATVWTGVPFAHKDIFCTSGIRTSCGSKMLDNFVPPYDATVTANFKAAGAVCLGKTNMDEFAMGSSNESSFYGAVTNPWGLSGGDKRVPGGSSGGSAAAVAARLVPAATGTDTGGSIRQPAALCGITGLKPTYGRVSRYGMIAFASSLDQGGPMARTAEDAALMLNVMAGHDPKDSTCIDREVPDYTATLNEPLKGLKIGLPKEYFSDQLAPAMEEQVRNAIREYEKLGATVKEVSLPNAKLAIAAYYVIAPAEASANLSRFDGVRYGYRCEDPKDLMDMYTRSRAEGFGNEVKRRILVGSYALSAGYFDAYYLKAQKVRRLIQQDFINAFKEVDVLMSPVSPTPAFRQGEKNTDPVSMYLEDVFTIAINLAGIPAMSVPAGFVDGLPVGLQIIGDYFSEARLLNAAHQFQQVTDWHQREPQ</sequence>
<keyword id="KW-0067">ATP-binding</keyword>
<keyword id="KW-0436">Ligase</keyword>
<keyword id="KW-0547">Nucleotide-binding</keyword>
<keyword id="KW-0648">Protein biosynthesis</keyword>
<reference key="1">
    <citation type="journal article" date="2011" name="Appl. Environ. Microbiol.">
        <title>Genomic potential of Marinobacter aquaeolei, a biogeochemical 'opportunitroph'.</title>
        <authorList>
            <person name="Singer E."/>
            <person name="Webb E.A."/>
            <person name="Nelson W.C."/>
            <person name="Heidelberg J.F."/>
            <person name="Ivanova N."/>
            <person name="Pati A."/>
            <person name="Edwards K.J."/>
        </authorList>
    </citation>
    <scope>NUCLEOTIDE SEQUENCE [LARGE SCALE GENOMIC DNA]</scope>
    <source>
        <strain>ATCC 700491 / DSM 11845 / VT8</strain>
    </source>
</reference>
<protein>
    <recommendedName>
        <fullName evidence="1">Glutamyl-tRNA(Gln) amidotransferase subunit A</fullName>
        <shortName evidence="1">Glu-ADT subunit A</shortName>
        <ecNumber evidence="1">6.3.5.7</ecNumber>
    </recommendedName>
</protein>
<comment type="function">
    <text evidence="1">Allows the formation of correctly charged Gln-tRNA(Gln) through the transamidation of misacylated Glu-tRNA(Gln) in organisms which lack glutaminyl-tRNA synthetase. The reaction takes place in the presence of glutamine and ATP through an activated gamma-phospho-Glu-tRNA(Gln).</text>
</comment>
<comment type="catalytic activity">
    <reaction evidence="1">
        <text>L-glutamyl-tRNA(Gln) + L-glutamine + ATP + H2O = L-glutaminyl-tRNA(Gln) + L-glutamate + ADP + phosphate + H(+)</text>
        <dbReference type="Rhea" id="RHEA:17521"/>
        <dbReference type="Rhea" id="RHEA-COMP:9681"/>
        <dbReference type="Rhea" id="RHEA-COMP:9684"/>
        <dbReference type="ChEBI" id="CHEBI:15377"/>
        <dbReference type="ChEBI" id="CHEBI:15378"/>
        <dbReference type="ChEBI" id="CHEBI:29985"/>
        <dbReference type="ChEBI" id="CHEBI:30616"/>
        <dbReference type="ChEBI" id="CHEBI:43474"/>
        <dbReference type="ChEBI" id="CHEBI:58359"/>
        <dbReference type="ChEBI" id="CHEBI:78520"/>
        <dbReference type="ChEBI" id="CHEBI:78521"/>
        <dbReference type="ChEBI" id="CHEBI:456216"/>
        <dbReference type="EC" id="6.3.5.7"/>
    </reaction>
</comment>
<comment type="subunit">
    <text evidence="1">Heterotrimer of A, B and C subunits.</text>
</comment>
<comment type="similarity">
    <text evidence="1">Belongs to the amidase family. GatA subfamily.</text>
</comment>
<feature type="chain" id="PRO_1000015857" description="Glutamyl-tRNA(Gln) amidotransferase subunit A">
    <location>
        <begin position="1"/>
        <end position="485"/>
    </location>
</feature>
<feature type="active site" description="Charge relay system" evidence="1">
    <location>
        <position position="76"/>
    </location>
</feature>
<feature type="active site" description="Charge relay system" evidence="1">
    <location>
        <position position="155"/>
    </location>
</feature>
<feature type="active site" description="Acyl-ester intermediate" evidence="1">
    <location>
        <position position="179"/>
    </location>
</feature>